<gene>
    <name evidence="1" type="primary">arsC1</name>
    <name type="ordered locus">SH0101</name>
</gene>
<feature type="chain" id="PRO_0000162530" description="Arsenate reductase 1">
    <location>
        <begin position="1"/>
        <end position="133"/>
    </location>
</feature>
<feature type="active site" description="Nucleophile" evidence="1">
    <location>
        <position position="10"/>
    </location>
</feature>
<feature type="active site" description="Nucleophile" evidence="1">
    <location>
        <position position="82"/>
    </location>
</feature>
<feature type="active site" description="Nucleophile" evidence="1">
    <location>
        <position position="89"/>
    </location>
</feature>
<feature type="disulfide bond" description="Redox-active; alternate" evidence="1">
    <location>
        <begin position="10"/>
        <end position="82"/>
    </location>
</feature>
<feature type="disulfide bond" description="Redox-active; alternate" evidence="1">
    <location>
        <begin position="82"/>
        <end position="89"/>
    </location>
</feature>
<comment type="function">
    <text evidence="1">Catalyzes the reduction of arsenate [As(V)] to arsenite [As(III)].</text>
</comment>
<comment type="catalytic activity">
    <reaction evidence="1">
        <text>arsenate + [thioredoxin]-dithiol + H(+) = arsenite + [thioredoxin]-disulfide + H2O</text>
        <dbReference type="Rhea" id="RHEA:43848"/>
        <dbReference type="Rhea" id="RHEA-COMP:10698"/>
        <dbReference type="Rhea" id="RHEA-COMP:10700"/>
        <dbReference type="ChEBI" id="CHEBI:15377"/>
        <dbReference type="ChEBI" id="CHEBI:15378"/>
        <dbReference type="ChEBI" id="CHEBI:29242"/>
        <dbReference type="ChEBI" id="CHEBI:29950"/>
        <dbReference type="ChEBI" id="CHEBI:48597"/>
        <dbReference type="ChEBI" id="CHEBI:50058"/>
        <dbReference type="EC" id="1.20.4.4"/>
    </reaction>
</comment>
<comment type="subcellular location">
    <subcellularLocation>
        <location evidence="1">Cytoplasm</location>
    </subcellularLocation>
</comment>
<comment type="similarity">
    <text evidence="1">Belongs to the low molecular weight phosphotyrosine protein phosphatase family. Thioredoxin-coupled ArsC subfamily.</text>
</comment>
<evidence type="ECO:0000255" key="1">
    <source>
        <dbReference type="HAMAP-Rule" id="MF_01624"/>
    </source>
</evidence>
<name>ARSC1_STAHJ</name>
<organism>
    <name type="scientific">Staphylococcus haemolyticus (strain JCSC1435)</name>
    <dbReference type="NCBI Taxonomy" id="279808"/>
    <lineage>
        <taxon>Bacteria</taxon>
        <taxon>Bacillati</taxon>
        <taxon>Bacillota</taxon>
        <taxon>Bacilli</taxon>
        <taxon>Bacillales</taxon>
        <taxon>Staphylococcaceae</taxon>
        <taxon>Staphylococcus</taxon>
    </lineage>
</organism>
<keyword id="KW-0059">Arsenical resistance</keyword>
<keyword id="KW-0963">Cytoplasm</keyword>
<keyword id="KW-1015">Disulfide bond</keyword>
<keyword id="KW-0560">Oxidoreductase</keyword>
<keyword id="KW-0676">Redox-active center</keyword>
<protein>
    <recommendedName>
        <fullName evidence="1">Arsenate reductase 1</fullName>
        <ecNumber evidence="1">1.20.4.4</ecNumber>
    </recommendedName>
</protein>
<sequence>MDKKTIYFICSGNSCRSQMAEGWGKEILGEDWNVYSAGIETHGVNPKAIEAMKEVDIDISNHTSDLIDSDILEQSDLVVTLCSDADDNCPILPPNVKKEHWGFDDPAGKEWPEFQRVRDEIGKRIQEFKETLV</sequence>
<reference key="1">
    <citation type="journal article" date="2005" name="J. Bacteriol.">
        <title>Whole-genome sequencing of Staphylococcus haemolyticus uncovers the extreme plasticity of its genome and the evolution of human-colonizing staphylococcal species.</title>
        <authorList>
            <person name="Takeuchi F."/>
            <person name="Watanabe S."/>
            <person name="Baba T."/>
            <person name="Yuzawa H."/>
            <person name="Ito T."/>
            <person name="Morimoto Y."/>
            <person name="Kuroda M."/>
            <person name="Cui L."/>
            <person name="Takahashi M."/>
            <person name="Ankai A."/>
            <person name="Baba S."/>
            <person name="Fukui S."/>
            <person name="Lee J.C."/>
            <person name="Hiramatsu K."/>
        </authorList>
    </citation>
    <scope>NUCLEOTIDE SEQUENCE [LARGE SCALE GENOMIC DNA]</scope>
    <source>
        <strain>JCSC1435</strain>
    </source>
</reference>
<dbReference type="EC" id="1.20.4.4" evidence="1"/>
<dbReference type="EMBL" id="AP006716">
    <property type="protein sequence ID" value="BAE03410.1"/>
    <property type="molecule type" value="Genomic_DNA"/>
</dbReference>
<dbReference type="SMR" id="Q4LAB5"/>
<dbReference type="KEGG" id="sha:SH0101"/>
<dbReference type="eggNOG" id="COG0394">
    <property type="taxonomic scope" value="Bacteria"/>
</dbReference>
<dbReference type="HOGENOM" id="CLU_071415_3_2_9"/>
<dbReference type="OrthoDB" id="9784339at2"/>
<dbReference type="Proteomes" id="UP000000543">
    <property type="component" value="Chromosome"/>
</dbReference>
<dbReference type="GO" id="GO:0005737">
    <property type="term" value="C:cytoplasm"/>
    <property type="evidence" value="ECO:0007669"/>
    <property type="project" value="UniProtKB-SubCell"/>
</dbReference>
<dbReference type="GO" id="GO:0030612">
    <property type="term" value="F:arsenate reductase (thioredoxin) activity"/>
    <property type="evidence" value="ECO:0007669"/>
    <property type="project" value="UniProtKB-UniRule"/>
</dbReference>
<dbReference type="GO" id="GO:0004725">
    <property type="term" value="F:protein tyrosine phosphatase activity"/>
    <property type="evidence" value="ECO:0007669"/>
    <property type="project" value="InterPro"/>
</dbReference>
<dbReference type="GO" id="GO:0046685">
    <property type="term" value="P:response to arsenic-containing substance"/>
    <property type="evidence" value="ECO:0007669"/>
    <property type="project" value="UniProtKB-KW"/>
</dbReference>
<dbReference type="CDD" id="cd16345">
    <property type="entry name" value="LMWP_ArsC"/>
    <property type="match status" value="1"/>
</dbReference>
<dbReference type="FunFam" id="3.40.50.2300:FF:000237">
    <property type="entry name" value="Arsenate reductase"/>
    <property type="match status" value="1"/>
</dbReference>
<dbReference type="Gene3D" id="3.40.50.2300">
    <property type="match status" value="1"/>
</dbReference>
<dbReference type="HAMAP" id="MF_01624">
    <property type="entry name" value="Arsenate_reduct"/>
    <property type="match status" value="1"/>
</dbReference>
<dbReference type="InterPro" id="IPR014064">
    <property type="entry name" value="Arsenate_reductase_ArsC"/>
</dbReference>
<dbReference type="InterPro" id="IPR023485">
    <property type="entry name" value="Ptyr_pPase"/>
</dbReference>
<dbReference type="InterPro" id="IPR036196">
    <property type="entry name" value="Ptyr_pPase_sf"/>
</dbReference>
<dbReference type="NCBIfam" id="TIGR02691">
    <property type="entry name" value="arsC_pI258_fam"/>
    <property type="match status" value="1"/>
</dbReference>
<dbReference type="NCBIfam" id="NF010053">
    <property type="entry name" value="PRK13530.1"/>
    <property type="match status" value="1"/>
</dbReference>
<dbReference type="PANTHER" id="PTHR43428">
    <property type="entry name" value="ARSENATE REDUCTASE"/>
    <property type="match status" value="1"/>
</dbReference>
<dbReference type="PANTHER" id="PTHR43428:SF1">
    <property type="entry name" value="ARSENATE REDUCTASE"/>
    <property type="match status" value="1"/>
</dbReference>
<dbReference type="Pfam" id="PF01451">
    <property type="entry name" value="LMWPc"/>
    <property type="match status" value="1"/>
</dbReference>
<dbReference type="SMART" id="SM00226">
    <property type="entry name" value="LMWPc"/>
    <property type="match status" value="1"/>
</dbReference>
<dbReference type="SUPFAM" id="SSF52788">
    <property type="entry name" value="Phosphotyrosine protein phosphatases I"/>
    <property type="match status" value="1"/>
</dbReference>
<proteinExistence type="inferred from homology"/>
<accession>Q4LAB5</accession>